<sequence>MAPAPLGVPEEQLLGCRSRVLSRLLFIAQTALLLLPAAGAGLCPAPCSCRIPLLDCSRRKLPAPSWRALSGLLPPDTAILDFSHNRLSNWNISLESQTLQEVKMNYNELTEIPYFGEPTSNITLLSLVHNIIPEINAQALQFYPALESLDLSSNIISEIKTSSFPRMQLKYLNLSNNRITTLEAGCFDNLSSSLLVVKLNRNRMSMIPPKIFKLPHLQFLELKRNRIKIVEGLTFQGLDSLRSLKMQRNGISKLKDGAFFGLNNMEELELEHNNLTRVNKGWLYGLRMLQQLYVSQNAIERISPDAWEFCQRLSELDLSYNQLTRLDESAFVGLSLLERLNLGDNRVTHIADGVFRFLSNLQTLDLRNNEISWAIEDASEAFAGLTSLTKLILQGNQIKSITKKAFIGLESLEHLDLNNNAIMSIQENAFSQTHLKELILNTSSLLCDCHLKWLLQWLVDNNFQHSVNVSCAHPEWLAGQSILNVDLKDFVCDDFLKPQIRTHPETIIALRGMNVTLTCTAVSSSDSPMSTVWRKDSEILYDVDTENFVRYWQQAGEALEYTSILHLFNVNFTDEGKYQCIVTNHFGSNYSQKAKLTVNEMPSFLKTPMDLTIRTGAMARLECAAEGHPAPQISWQKDGGTDFPAARERRMHVMPEDDVFFIANVKIEDMGIYSCMAQNTAGGLSANASLTVLETPSFIRPLEDKTVTRGETAVLQCIAGGSPAPRLNWTKDDGPLLVTERHFFAAANQLLIIVDAGLEDAGKYTCIMSNTLGTERGHIYLNVISSPNCDSSQSSIGHEDDGWTTVGIVIIVVVCCVVGTSLIWVIVIYHMRRKNEDYSITNTEELNLPADIPSYLSSQGTLSEPQEGYSNSEAGSHQQLMPPANGYIHKGTDGGTGTRVICSDCYDNANIYSRTREYCPYTYIAEEDVLDQTLSSLMVQMPKETYLVHPPQDTTALESLIPSANREPSAFPTNHERISEKKLPSTQMSGETLQRPVWNINRELGLPHPPFSQQPVHESPQLHQNEGLAGREPDCSASSMSCHRLQDHAFDFSRTRNIQDGSEGT</sequence>
<accession>O94898</accession>
<accession>Q9NSN2</accession>
<comment type="interaction">
    <interactant intactId="EBI-2830372">
        <id>O94898</id>
    </interactant>
    <interactant intactId="EBI-297353">
        <id>P00533</id>
        <label>EGFR</label>
    </interactant>
    <organismsDiffer>false</organismsDiffer>
    <experiments>4</experiments>
</comment>
<comment type="interaction">
    <interactant intactId="EBI-2830372">
        <id>O94898</id>
    </interactant>
    <interactant intactId="EBI-641237">
        <id>P09619</id>
        <label>PDGFRB</label>
    </interactant>
    <organismsDiffer>false</organismsDiffer>
    <experiments>3</experiments>
</comment>
<comment type="subcellular location">
    <subcellularLocation>
        <location evidence="5">Cell membrane</location>
        <topology evidence="5">Single-pass type I membrane protein</topology>
    </subcellularLocation>
    <subcellularLocation>
        <location evidence="5">Cytoplasm</location>
    </subcellularLocation>
</comment>
<comment type="tissue specificity">
    <text evidence="5">Detected in all tissues analyzed.</text>
</comment>
<comment type="disease" evidence="6">
    <disease id="DI-03706">
        <name>Urofacial syndrome 2</name>
        <acronym>UFS2</acronym>
        <description>A rare autosomal recessive disorder characterized by facial grimacing when attempting to smile and failure of the urinary bladder to void completely despite a lack of anatomical bladder outflow obstruction or overt neurological damage. Affected individuals often have reflux of infected urine from the bladder to the upper renal tract, with a risk of kidney damage and renal failure.</description>
        <dbReference type="MIM" id="615112"/>
    </disease>
    <text>The disease is caused by variants affecting the gene represented in this entry.</text>
</comment>
<comment type="sequence caution" evidence="7">
    <conflict type="erroneous initiation">
        <sequence resource="EMBL-CDS" id="BAA34526"/>
    </conflict>
    <text>Extended N-terminus.</text>
</comment>
<feature type="signal peptide" evidence="2">
    <location>
        <begin position="1"/>
        <end position="40"/>
    </location>
</feature>
<feature type="chain" id="PRO_0000014829" description="Leucine-rich repeats and immunoglobulin-like domains protein 2">
    <location>
        <begin position="41"/>
        <end position="1065"/>
    </location>
</feature>
<feature type="topological domain" description="Extracellular" evidence="2">
    <location>
        <begin position="41"/>
        <end position="807"/>
    </location>
</feature>
<feature type="transmembrane region" description="Helical" evidence="2">
    <location>
        <begin position="808"/>
        <end position="828"/>
    </location>
</feature>
<feature type="topological domain" description="Cytoplasmic" evidence="2">
    <location>
        <begin position="829"/>
        <end position="1065"/>
    </location>
</feature>
<feature type="domain" description="LRRNT">
    <location>
        <begin position="41"/>
        <end position="75"/>
    </location>
</feature>
<feature type="repeat" description="LRR 1">
    <location>
        <begin position="76"/>
        <end position="97"/>
    </location>
</feature>
<feature type="repeat" description="LRR 2">
    <location>
        <begin position="98"/>
        <end position="119"/>
    </location>
</feature>
<feature type="repeat" description="LRR 3">
    <location>
        <begin position="121"/>
        <end position="142"/>
    </location>
</feature>
<feature type="repeat" description="LRR 4">
    <location>
        <begin position="145"/>
        <end position="166"/>
    </location>
</feature>
<feature type="repeat" description="LRR 5">
    <location>
        <begin position="168"/>
        <end position="189"/>
    </location>
</feature>
<feature type="repeat" description="LRR 6">
    <location>
        <begin position="193"/>
        <end position="214"/>
    </location>
</feature>
<feature type="repeat" description="LRR 7">
    <location>
        <begin position="216"/>
        <end position="237"/>
    </location>
</feature>
<feature type="repeat" description="LRR 8">
    <location>
        <begin position="240"/>
        <end position="261"/>
    </location>
</feature>
<feature type="repeat" description="LRR 9">
    <location>
        <begin position="264"/>
        <end position="285"/>
    </location>
</feature>
<feature type="repeat" description="LRR 10">
    <location>
        <begin position="288"/>
        <end position="309"/>
    </location>
</feature>
<feature type="repeat" description="LRR 11">
    <location>
        <begin position="312"/>
        <end position="333"/>
    </location>
</feature>
<feature type="repeat" description="LRR 12">
    <location>
        <begin position="336"/>
        <end position="357"/>
    </location>
</feature>
<feature type="repeat" description="LRR 13">
    <location>
        <begin position="360"/>
        <end position="382"/>
    </location>
</feature>
<feature type="repeat" description="LRR 14">
    <location>
        <begin position="387"/>
        <end position="408"/>
    </location>
</feature>
<feature type="repeat" description="LRR 15">
    <location>
        <begin position="411"/>
        <end position="432"/>
    </location>
</feature>
<feature type="domain" description="LRRCT">
    <location>
        <begin position="443"/>
        <end position="494"/>
    </location>
</feature>
<feature type="domain" description="Ig-like C2-type 1">
    <location>
        <begin position="498"/>
        <end position="597"/>
    </location>
</feature>
<feature type="domain" description="Ig-like C2-type 2">
    <location>
        <begin position="602"/>
        <end position="691"/>
    </location>
</feature>
<feature type="domain" description="Ig-like C2-type 3">
    <location>
        <begin position="696"/>
        <end position="785"/>
    </location>
</feature>
<feature type="region of interest" description="Disordered" evidence="4">
    <location>
        <begin position="963"/>
        <end position="990"/>
    </location>
</feature>
<feature type="region of interest" description="Disordered" evidence="4">
    <location>
        <begin position="1003"/>
        <end position="1040"/>
    </location>
</feature>
<feature type="compositionally biased region" description="Basic and acidic residues" evidence="4">
    <location>
        <begin position="974"/>
        <end position="983"/>
    </location>
</feature>
<feature type="compositionally biased region" description="Polar residues" evidence="4">
    <location>
        <begin position="1013"/>
        <end position="1024"/>
    </location>
</feature>
<feature type="modified residue" description="Phosphotyrosine" evidence="1">
    <location>
        <position position="906"/>
    </location>
</feature>
<feature type="glycosylation site" description="N-linked (GlcNAc...) asparagine" evidence="2">
    <location>
        <position position="91"/>
    </location>
</feature>
<feature type="glycosylation site" description="N-linked (GlcNAc...) asparagine" evidence="2">
    <location>
        <position position="121"/>
    </location>
</feature>
<feature type="glycosylation site" description="N-linked (GlcNAc...) asparagine" evidence="2">
    <location>
        <position position="173"/>
    </location>
</feature>
<feature type="glycosylation site" description="N-linked (GlcNAc...) asparagine" evidence="2">
    <location>
        <position position="189"/>
    </location>
</feature>
<feature type="glycosylation site" description="N-linked (GlcNAc...) asparagine" evidence="2">
    <location>
        <position position="274"/>
    </location>
</feature>
<feature type="glycosylation site" description="N-linked (GlcNAc...) asparagine" evidence="2">
    <location>
        <position position="441"/>
    </location>
</feature>
<feature type="glycosylation site" description="N-linked (GlcNAc...) asparagine" evidence="2">
    <location>
        <position position="468"/>
    </location>
</feature>
<feature type="glycosylation site" description="N-linked (GlcNAc...) asparagine" evidence="2">
    <location>
        <position position="514"/>
    </location>
</feature>
<feature type="glycosylation site" description="N-linked (GlcNAc...) asparagine" evidence="2">
    <location>
        <position position="571"/>
    </location>
</feature>
<feature type="glycosylation site" description="N-linked (GlcNAc...) asparagine" evidence="2">
    <location>
        <position position="589"/>
    </location>
</feature>
<feature type="glycosylation site" description="N-linked (GlcNAc...) asparagine" evidence="2">
    <location>
        <position position="687"/>
    </location>
</feature>
<feature type="glycosylation site" description="N-linked (GlcNAc...) asparagine" evidence="2">
    <location>
        <position position="728"/>
    </location>
</feature>
<feature type="disulfide bond" evidence="3">
    <location>
        <begin position="519"/>
        <end position="580"/>
    </location>
</feature>
<feature type="disulfide bond" evidence="3">
    <location>
        <begin position="623"/>
        <end position="675"/>
    </location>
</feature>
<feature type="disulfide bond" evidence="3">
    <location>
        <begin position="717"/>
        <end position="766"/>
    </location>
</feature>
<keyword id="KW-1003">Cell membrane</keyword>
<keyword id="KW-0963">Cytoplasm</keyword>
<keyword id="KW-1015">Disulfide bond</keyword>
<keyword id="KW-0325">Glycoprotein</keyword>
<keyword id="KW-0393">Immunoglobulin domain</keyword>
<keyword id="KW-0433">Leucine-rich repeat</keyword>
<keyword id="KW-0472">Membrane</keyword>
<keyword id="KW-0597">Phosphoprotein</keyword>
<keyword id="KW-1267">Proteomics identification</keyword>
<keyword id="KW-1185">Reference proteome</keyword>
<keyword id="KW-0677">Repeat</keyword>
<keyword id="KW-0732">Signal</keyword>
<keyword id="KW-0812">Transmembrane</keyword>
<keyword id="KW-1133">Transmembrane helix</keyword>
<reference key="1">
    <citation type="journal article" date="1998" name="DNA Res.">
        <title>Prediction of the coding sequences of unidentified human genes. XI. The complete sequences of 100 new cDNA clones from brain which code for large proteins in vitro.</title>
        <authorList>
            <person name="Nagase T."/>
            <person name="Ishikawa K."/>
            <person name="Suyama M."/>
            <person name="Kikuno R."/>
            <person name="Miyajima N."/>
            <person name="Tanaka A."/>
            <person name="Kotani H."/>
            <person name="Nomura N."/>
            <person name="Ohara O."/>
        </authorList>
    </citation>
    <scope>NUCLEOTIDE SEQUENCE [LARGE SCALE MRNA]</scope>
    <source>
        <tissue>Brain</tissue>
    </source>
</reference>
<reference key="2">
    <citation type="journal article" date="2007" name="BMC Genomics">
        <title>The full-ORF clone resource of the German cDNA consortium.</title>
        <authorList>
            <person name="Bechtel S."/>
            <person name="Rosenfelder H."/>
            <person name="Duda A."/>
            <person name="Schmidt C.P."/>
            <person name="Ernst U."/>
            <person name="Wellenreuther R."/>
            <person name="Mehrle A."/>
            <person name="Schuster C."/>
            <person name="Bahr A."/>
            <person name="Bloecker H."/>
            <person name="Heubner D."/>
            <person name="Hoerlein A."/>
            <person name="Michel G."/>
            <person name="Wedler H."/>
            <person name="Koehrer K."/>
            <person name="Ottenwaelder B."/>
            <person name="Poustka A."/>
            <person name="Wiemann S."/>
            <person name="Schupp I."/>
        </authorList>
    </citation>
    <scope>NUCLEOTIDE SEQUENCE [LARGE SCALE MRNA] OF 1-133</scope>
    <source>
        <tissue>Brain</tissue>
    </source>
</reference>
<reference key="3">
    <citation type="journal article" date="2004" name="Gene">
        <title>Characterization and tissue-specific expression of human LRIG2.</title>
        <authorList>
            <person name="Holmlund C."/>
            <person name="Nilsson J."/>
            <person name="Guo D."/>
            <person name="Starefeldt A."/>
            <person name="Golovleva I."/>
            <person name="Henriksson R."/>
            <person name="Hedman H."/>
        </authorList>
    </citation>
    <scope>SUBCELLULAR LOCATION</scope>
    <scope>TISSUE SPECIFICITY</scope>
</reference>
<reference key="4">
    <citation type="journal article" date="2013" name="Am. J. Hum. Genet.">
        <title>LRIG2 mutations cause urofacial syndrome.</title>
        <authorList>
            <person name="Stuart H.M."/>
            <person name="Roberts N.A."/>
            <person name="Burgu B."/>
            <person name="Daly S.B."/>
            <person name="Urquhart J.E."/>
            <person name="Bhaskar S."/>
            <person name="Dickerson J.E."/>
            <person name="Mermerkaya M."/>
            <person name="Silay M.S."/>
            <person name="Lewis M.A."/>
            <person name="Olondriz M.B."/>
            <person name="Gener B."/>
            <person name="Beetz C."/>
            <person name="Varga R.E."/>
            <person name="Guelpinar O."/>
            <person name="Sueer E."/>
            <person name="Soyguer T."/>
            <person name="Ozcakar Z.B."/>
            <person name="Yalcinkaya F."/>
            <person name="Kavaz A."/>
            <person name="Bulum B."/>
            <person name="Guecuek A."/>
            <person name="Yue W.W."/>
            <person name="Erdogan F."/>
            <person name="Berry A."/>
            <person name="Hanley N.A."/>
            <person name="McKenzie E.A."/>
            <person name="Hilton E.N."/>
            <person name="Woolf A.S."/>
            <person name="Newman W.G."/>
        </authorList>
    </citation>
    <scope>INVOLVEMENT IN UFS2</scope>
</reference>
<name>LRIG2_HUMAN</name>
<dbReference type="EMBL" id="AB018349">
    <property type="protein sequence ID" value="BAA34526.2"/>
    <property type="status" value="ALT_INIT"/>
    <property type="molecule type" value="mRNA"/>
</dbReference>
<dbReference type="EMBL" id="AL161998">
    <property type="protein sequence ID" value="CAB82328.2"/>
    <property type="molecule type" value="mRNA"/>
</dbReference>
<dbReference type="CCDS" id="CCDS30808.1"/>
<dbReference type="PIR" id="T47152">
    <property type="entry name" value="T47152"/>
</dbReference>
<dbReference type="RefSeq" id="NP_001299615.1">
    <property type="nucleotide sequence ID" value="NM_001312686.1"/>
</dbReference>
<dbReference type="RefSeq" id="NP_055628.1">
    <property type="nucleotide sequence ID" value="NM_014813.3"/>
</dbReference>
<dbReference type="SMR" id="O94898"/>
<dbReference type="BioGRID" id="115194">
    <property type="interactions" value="103"/>
</dbReference>
<dbReference type="FunCoup" id="O94898">
    <property type="interactions" value="718"/>
</dbReference>
<dbReference type="IntAct" id="O94898">
    <property type="interactions" value="35"/>
</dbReference>
<dbReference type="STRING" id="9606.ENSP00000355396"/>
<dbReference type="GlyCosmos" id="O94898">
    <property type="glycosylation" value="12 sites, No reported glycans"/>
</dbReference>
<dbReference type="GlyGen" id="O94898">
    <property type="glycosylation" value="13 sites, 7 N-linked glycans (7 sites), 1 O-linked glycan (1 site)"/>
</dbReference>
<dbReference type="iPTMnet" id="O94898"/>
<dbReference type="PhosphoSitePlus" id="O94898"/>
<dbReference type="SwissPalm" id="O94898"/>
<dbReference type="BioMuta" id="LRIG2"/>
<dbReference type="jPOST" id="O94898"/>
<dbReference type="MassIVE" id="O94898"/>
<dbReference type="PaxDb" id="9606-ENSP00000355396"/>
<dbReference type="PeptideAtlas" id="O94898"/>
<dbReference type="ProteomicsDB" id="50530"/>
<dbReference type="Pumba" id="O94898"/>
<dbReference type="Antibodypedia" id="2748">
    <property type="antibodies" value="134 antibodies from 19 providers"/>
</dbReference>
<dbReference type="DNASU" id="9860"/>
<dbReference type="Ensembl" id="ENST00000361127.6">
    <property type="protein sequence ID" value="ENSP00000355396.4"/>
    <property type="gene ID" value="ENSG00000198799.12"/>
</dbReference>
<dbReference type="GeneID" id="9860"/>
<dbReference type="KEGG" id="hsa:9860"/>
<dbReference type="MANE-Select" id="ENST00000361127.6">
    <property type="protein sequence ID" value="ENSP00000355396.4"/>
    <property type="RefSeq nucleotide sequence ID" value="NM_014813.3"/>
    <property type="RefSeq protein sequence ID" value="NP_055628.1"/>
</dbReference>
<dbReference type="UCSC" id="uc001edf.2">
    <property type="organism name" value="human"/>
</dbReference>
<dbReference type="AGR" id="HGNC:20889"/>
<dbReference type="CTD" id="9860"/>
<dbReference type="DisGeNET" id="9860"/>
<dbReference type="GeneCards" id="LRIG2"/>
<dbReference type="GeneReviews" id="LRIG2"/>
<dbReference type="HGNC" id="HGNC:20889">
    <property type="gene designation" value="LRIG2"/>
</dbReference>
<dbReference type="HPA" id="ENSG00000198799">
    <property type="expression patterns" value="Low tissue specificity"/>
</dbReference>
<dbReference type="MalaCards" id="LRIG2"/>
<dbReference type="MIM" id="608869">
    <property type="type" value="gene"/>
</dbReference>
<dbReference type="MIM" id="615112">
    <property type="type" value="phenotype"/>
</dbReference>
<dbReference type="neXtProt" id="NX_O94898"/>
<dbReference type="OpenTargets" id="ENSG00000198799"/>
<dbReference type="Orphanet" id="2704">
    <property type="disease" value="Urofacial syndrome"/>
</dbReference>
<dbReference type="PharmGKB" id="PA134905053"/>
<dbReference type="VEuPathDB" id="HostDB:ENSG00000198799"/>
<dbReference type="eggNOG" id="KOG4194">
    <property type="taxonomic scope" value="Eukaryota"/>
</dbReference>
<dbReference type="GeneTree" id="ENSGT00940000158791"/>
<dbReference type="HOGENOM" id="CLU_000288_18_24_1"/>
<dbReference type="InParanoid" id="O94898"/>
<dbReference type="OMA" id="QVTMNHN"/>
<dbReference type="OrthoDB" id="5917255at2759"/>
<dbReference type="PAN-GO" id="O94898">
    <property type="GO annotations" value="2 GO annotations based on evolutionary models"/>
</dbReference>
<dbReference type="PhylomeDB" id="O94898"/>
<dbReference type="TreeFam" id="TF325380"/>
<dbReference type="PathwayCommons" id="O94898"/>
<dbReference type="SignaLink" id="O94898"/>
<dbReference type="BioGRID-ORCS" id="9860">
    <property type="hits" value="14 hits in 1151 CRISPR screens"/>
</dbReference>
<dbReference type="ChiTaRS" id="LRIG2">
    <property type="organism name" value="human"/>
</dbReference>
<dbReference type="GenomeRNAi" id="9860"/>
<dbReference type="Pharos" id="O94898">
    <property type="development level" value="Tbio"/>
</dbReference>
<dbReference type="PRO" id="PR:O94898"/>
<dbReference type="Proteomes" id="UP000005640">
    <property type="component" value="Chromosome 1"/>
</dbReference>
<dbReference type="RNAct" id="O94898">
    <property type="molecule type" value="protein"/>
</dbReference>
<dbReference type="Bgee" id="ENSG00000198799">
    <property type="expression patterns" value="Expressed in tendon of biceps brachii and 188 other cell types or tissues"/>
</dbReference>
<dbReference type="GO" id="GO:0005737">
    <property type="term" value="C:cytoplasm"/>
    <property type="evidence" value="ECO:0007669"/>
    <property type="project" value="UniProtKB-SubCell"/>
</dbReference>
<dbReference type="GO" id="GO:0031012">
    <property type="term" value="C:extracellular matrix"/>
    <property type="evidence" value="ECO:0000318"/>
    <property type="project" value="GO_Central"/>
</dbReference>
<dbReference type="GO" id="GO:0005615">
    <property type="term" value="C:extracellular space"/>
    <property type="evidence" value="ECO:0000318"/>
    <property type="project" value="GO_Central"/>
</dbReference>
<dbReference type="GO" id="GO:0030426">
    <property type="term" value="C:growth cone"/>
    <property type="evidence" value="ECO:0007669"/>
    <property type="project" value="Ensembl"/>
</dbReference>
<dbReference type="GO" id="GO:0097708">
    <property type="term" value="C:intracellular vesicle"/>
    <property type="evidence" value="ECO:0007669"/>
    <property type="project" value="Ensembl"/>
</dbReference>
<dbReference type="GO" id="GO:0005886">
    <property type="term" value="C:plasma membrane"/>
    <property type="evidence" value="ECO:0007669"/>
    <property type="project" value="UniProtKB-SubCell"/>
</dbReference>
<dbReference type="GO" id="GO:0005102">
    <property type="term" value="F:signaling receptor binding"/>
    <property type="evidence" value="ECO:0007669"/>
    <property type="project" value="Ensembl"/>
</dbReference>
<dbReference type="GO" id="GO:0060384">
    <property type="term" value="P:innervation"/>
    <property type="evidence" value="ECO:0007669"/>
    <property type="project" value="Ensembl"/>
</dbReference>
<dbReference type="GO" id="GO:0006509">
    <property type="term" value="P:membrane protein ectodomain proteolysis"/>
    <property type="evidence" value="ECO:0007669"/>
    <property type="project" value="Ensembl"/>
</dbReference>
<dbReference type="GO" id="GO:0048681">
    <property type="term" value="P:negative regulation of axon regeneration"/>
    <property type="evidence" value="ECO:0007669"/>
    <property type="project" value="Ensembl"/>
</dbReference>
<dbReference type="GO" id="GO:0051045">
    <property type="term" value="P:negative regulation of membrane protein ectodomain proteolysis"/>
    <property type="evidence" value="ECO:0007669"/>
    <property type="project" value="Ensembl"/>
</dbReference>
<dbReference type="GO" id="GO:2000010">
    <property type="term" value="P:positive regulation of protein localization to cell surface"/>
    <property type="evidence" value="ECO:0007669"/>
    <property type="project" value="Ensembl"/>
</dbReference>
<dbReference type="GO" id="GO:0034394">
    <property type="term" value="P:protein localization to cell surface"/>
    <property type="evidence" value="ECO:0007669"/>
    <property type="project" value="Ensembl"/>
</dbReference>
<dbReference type="GO" id="GO:2001222">
    <property type="term" value="P:regulation of neuron migration"/>
    <property type="evidence" value="ECO:0007669"/>
    <property type="project" value="Ensembl"/>
</dbReference>
<dbReference type="GO" id="GO:0010640">
    <property type="term" value="P:regulation of platelet-derived growth factor receptor signaling pathway"/>
    <property type="evidence" value="ECO:0007669"/>
    <property type="project" value="Ensembl"/>
</dbReference>
<dbReference type="GO" id="GO:0007605">
    <property type="term" value="P:sensory perception of sound"/>
    <property type="evidence" value="ECO:0007669"/>
    <property type="project" value="Ensembl"/>
</dbReference>
<dbReference type="CDD" id="cd05763">
    <property type="entry name" value="IgI_LRIG1-like"/>
    <property type="match status" value="1"/>
</dbReference>
<dbReference type="FunFam" id="2.60.40.10:FF:000161">
    <property type="entry name" value="Leucine rich repeats and immunoglobulin like domains 2"/>
    <property type="match status" value="1"/>
</dbReference>
<dbReference type="FunFam" id="3.80.10.10:FF:001280">
    <property type="entry name" value="Leucine rich repeats and immunoglobulin like domains 2"/>
    <property type="match status" value="1"/>
</dbReference>
<dbReference type="FunFam" id="3.80.10.10:FF:002527">
    <property type="entry name" value="Leucine rich repeats and immunoglobulin like domains 2"/>
    <property type="match status" value="1"/>
</dbReference>
<dbReference type="FunFam" id="2.60.40.10:FF:000150">
    <property type="entry name" value="Leucine rich repeats and immunoglobulin like domains 3"/>
    <property type="match status" value="1"/>
</dbReference>
<dbReference type="FunFam" id="2.60.40.10:FF:000224">
    <property type="entry name" value="Leucine rich repeats and immunoglobulin like domains 3"/>
    <property type="match status" value="1"/>
</dbReference>
<dbReference type="FunFam" id="3.80.10.10:FF:000023">
    <property type="entry name" value="Leucine rich repeats and immunoglobulin like domains 3"/>
    <property type="match status" value="1"/>
</dbReference>
<dbReference type="Gene3D" id="2.60.40.10">
    <property type="entry name" value="Immunoglobulins"/>
    <property type="match status" value="3"/>
</dbReference>
<dbReference type="Gene3D" id="3.80.10.10">
    <property type="entry name" value="Ribonuclease Inhibitor"/>
    <property type="match status" value="2"/>
</dbReference>
<dbReference type="InterPro" id="IPR000483">
    <property type="entry name" value="Cys-rich_flank_reg_C"/>
</dbReference>
<dbReference type="InterPro" id="IPR007110">
    <property type="entry name" value="Ig-like_dom"/>
</dbReference>
<dbReference type="InterPro" id="IPR036179">
    <property type="entry name" value="Ig-like_dom_sf"/>
</dbReference>
<dbReference type="InterPro" id="IPR013783">
    <property type="entry name" value="Ig-like_fold"/>
</dbReference>
<dbReference type="InterPro" id="IPR013098">
    <property type="entry name" value="Ig_I-set"/>
</dbReference>
<dbReference type="InterPro" id="IPR003599">
    <property type="entry name" value="Ig_sub"/>
</dbReference>
<dbReference type="InterPro" id="IPR003598">
    <property type="entry name" value="Ig_sub2"/>
</dbReference>
<dbReference type="InterPro" id="IPR001611">
    <property type="entry name" value="Leu-rich_rpt"/>
</dbReference>
<dbReference type="InterPro" id="IPR003591">
    <property type="entry name" value="Leu-rich_rpt_typical-subtyp"/>
</dbReference>
<dbReference type="InterPro" id="IPR050467">
    <property type="entry name" value="LRFN"/>
</dbReference>
<dbReference type="InterPro" id="IPR032675">
    <property type="entry name" value="LRR_dom_sf"/>
</dbReference>
<dbReference type="PANTHER" id="PTHR45842:SF22">
    <property type="entry name" value="INSULIN-LIKE GROWTH FACTOR-BINDING PROTEIN COMPLEX ACID LABILE SUBUNIT ISOFORM X1"/>
    <property type="match status" value="1"/>
</dbReference>
<dbReference type="PANTHER" id="PTHR45842">
    <property type="entry name" value="SYNAPTIC ADHESION-LIKE MOLECULE SALM"/>
    <property type="match status" value="1"/>
</dbReference>
<dbReference type="Pfam" id="PF07679">
    <property type="entry name" value="I-set"/>
    <property type="match status" value="2"/>
</dbReference>
<dbReference type="Pfam" id="PF13927">
    <property type="entry name" value="Ig_3"/>
    <property type="match status" value="1"/>
</dbReference>
<dbReference type="Pfam" id="PF13855">
    <property type="entry name" value="LRR_8"/>
    <property type="match status" value="4"/>
</dbReference>
<dbReference type="Pfam" id="PF01463">
    <property type="entry name" value="LRRCT"/>
    <property type="match status" value="1"/>
</dbReference>
<dbReference type="PRINTS" id="PR00019">
    <property type="entry name" value="LEURICHRPT"/>
</dbReference>
<dbReference type="SMART" id="SM00409">
    <property type="entry name" value="IG"/>
    <property type="match status" value="3"/>
</dbReference>
<dbReference type="SMART" id="SM00408">
    <property type="entry name" value="IGc2"/>
    <property type="match status" value="3"/>
</dbReference>
<dbReference type="SMART" id="SM00365">
    <property type="entry name" value="LRR_SD22"/>
    <property type="match status" value="6"/>
</dbReference>
<dbReference type="SMART" id="SM00369">
    <property type="entry name" value="LRR_TYP"/>
    <property type="match status" value="11"/>
</dbReference>
<dbReference type="SMART" id="SM00082">
    <property type="entry name" value="LRRCT"/>
    <property type="match status" value="1"/>
</dbReference>
<dbReference type="SUPFAM" id="SSF48726">
    <property type="entry name" value="Immunoglobulin"/>
    <property type="match status" value="3"/>
</dbReference>
<dbReference type="SUPFAM" id="SSF52058">
    <property type="entry name" value="L domain-like"/>
    <property type="match status" value="1"/>
</dbReference>
<dbReference type="PROSITE" id="PS50835">
    <property type="entry name" value="IG_LIKE"/>
    <property type="match status" value="3"/>
</dbReference>
<dbReference type="PROSITE" id="PS51450">
    <property type="entry name" value="LRR"/>
    <property type="match status" value="14"/>
</dbReference>
<protein>
    <recommendedName>
        <fullName>Leucine-rich repeats and immunoglobulin-like domains protein 2</fullName>
        <shortName>LIG-2</shortName>
    </recommendedName>
</protein>
<evidence type="ECO:0000250" key="1">
    <source>
        <dbReference type="UniProtKB" id="Q52KR2"/>
    </source>
</evidence>
<evidence type="ECO:0000255" key="2"/>
<evidence type="ECO:0000255" key="3">
    <source>
        <dbReference type="PROSITE-ProRule" id="PRU00114"/>
    </source>
</evidence>
<evidence type="ECO:0000256" key="4">
    <source>
        <dbReference type="SAM" id="MobiDB-lite"/>
    </source>
</evidence>
<evidence type="ECO:0000269" key="5">
    <source>
    </source>
</evidence>
<evidence type="ECO:0000269" key="6">
    <source>
    </source>
</evidence>
<evidence type="ECO:0000305" key="7"/>
<gene>
    <name type="primary">LRIG2</name>
    <name type="synonym">KIAA0806</name>
    <name type="synonym">LIG2</name>
</gene>
<organism>
    <name type="scientific">Homo sapiens</name>
    <name type="common">Human</name>
    <dbReference type="NCBI Taxonomy" id="9606"/>
    <lineage>
        <taxon>Eukaryota</taxon>
        <taxon>Metazoa</taxon>
        <taxon>Chordata</taxon>
        <taxon>Craniata</taxon>
        <taxon>Vertebrata</taxon>
        <taxon>Euteleostomi</taxon>
        <taxon>Mammalia</taxon>
        <taxon>Eutheria</taxon>
        <taxon>Euarchontoglires</taxon>
        <taxon>Primates</taxon>
        <taxon>Haplorrhini</taxon>
        <taxon>Catarrhini</taxon>
        <taxon>Hominidae</taxon>
        <taxon>Homo</taxon>
    </lineage>
</organism>
<proteinExistence type="evidence at protein level"/>